<sequence length="272" mass="30282">MTTLACRKLAPHPESPRHQHAGPWLVWLHGLLGSGQDWLPVAQLCGDYPSLLIDLPGHGQSVSLSADGFADISRQLSQTLQANGIREYWLAGYSLGGRIAIYHACYGRHHGLQGLLVEGGNLGLENAELRQARLQQDRQWAQRFRQEPLPQVLDDWYQQAVFADLDPQQREQLVLLRADNHGPAVAEMLEATSLGHQPWLLPALQRLNVPYTYLCGDRDHKFLQLAQQYRLPLHTLARAGHNAHRANPGAFAAQVLAFLSQSSCLPPSSLSR</sequence>
<protein>
    <recommendedName>
        <fullName evidence="1">2-succinyl-6-hydroxy-2,4-cyclohexadiene-1-carboxylate synthase</fullName>
        <shortName evidence="1">SHCHC synthase</shortName>
        <ecNumber evidence="1">4.2.99.20</ecNumber>
    </recommendedName>
</protein>
<accession>Q1C6D8</accession>
<organism>
    <name type="scientific">Yersinia pestis bv. Antiqua (strain Antiqua)</name>
    <dbReference type="NCBI Taxonomy" id="360102"/>
    <lineage>
        <taxon>Bacteria</taxon>
        <taxon>Pseudomonadati</taxon>
        <taxon>Pseudomonadota</taxon>
        <taxon>Gammaproteobacteria</taxon>
        <taxon>Enterobacterales</taxon>
        <taxon>Yersiniaceae</taxon>
        <taxon>Yersinia</taxon>
    </lineage>
</organism>
<proteinExistence type="inferred from homology"/>
<evidence type="ECO:0000255" key="1">
    <source>
        <dbReference type="HAMAP-Rule" id="MF_01660"/>
    </source>
</evidence>
<reference key="1">
    <citation type="journal article" date="2006" name="J. Bacteriol.">
        <title>Complete genome sequence of Yersinia pestis strains Antiqua and Nepal516: evidence of gene reduction in an emerging pathogen.</title>
        <authorList>
            <person name="Chain P.S.G."/>
            <person name="Hu P."/>
            <person name="Malfatti S.A."/>
            <person name="Radnedge L."/>
            <person name="Larimer F."/>
            <person name="Vergez L.M."/>
            <person name="Worsham P."/>
            <person name="Chu M.C."/>
            <person name="Andersen G.L."/>
        </authorList>
    </citation>
    <scope>NUCLEOTIDE SEQUENCE [LARGE SCALE GENOMIC DNA]</scope>
    <source>
        <strain>Antiqua</strain>
    </source>
</reference>
<keyword id="KW-0456">Lyase</keyword>
<keyword id="KW-0474">Menaquinone biosynthesis</keyword>
<dbReference type="EC" id="4.2.99.20" evidence="1"/>
<dbReference type="EMBL" id="CP000308">
    <property type="protein sequence ID" value="ABG13984.1"/>
    <property type="molecule type" value="Genomic_DNA"/>
</dbReference>
<dbReference type="RefSeq" id="WP_002210246.1">
    <property type="nucleotide sequence ID" value="NZ_CP009906.1"/>
</dbReference>
<dbReference type="SMR" id="Q1C6D8"/>
<dbReference type="ESTHER" id="yerpe-YPO2526">
    <property type="family name" value="MenH_SHCHC"/>
</dbReference>
<dbReference type="GeneID" id="57976161"/>
<dbReference type="KEGG" id="ypa:YPA_2018"/>
<dbReference type="UniPathway" id="UPA00079"/>
<dbReference type="UniPathway" id="UPA01057">
    <property type="reaction ID" value="UER00900"/>
</dbReference>
<dbReference type="Proteomes" id="UP000001971">
    <property type="component" value="Chromosome"/>
</dbReference>
<dbReference type="GO" id="GO:0070205">
    <property type="term" value="F:2-succinyl-6-hydroxy-2,4-cyclohexadiene-1-carboxylate synthase activity"/>
    <property type="evidence" value="ECO:0007669"/>
    <property type="project" value="UniProtKB-UniRule"/>
</dbReference>
<dbReference type="GO" id="GO:0009234">
    <property type="term" value="P:menaquinone biosynthetic process"/>
    <property type="evidence" value="ECO:0007669"/>
    <property type="project" value="UniProtKB-UniRule"/>
</dbReference>
<dbReference type="Gene3D" id="3.40.50.1820">
    <property type="entry name" value="alpha/beta hydrolase"/>
    <property type="match status" value="1"/>
</dbReference>
<dbReference type="HAMAP" id="MF_01660">
    <property type="entry name" value="MenH"/>
    <property type="match status" value="1"/>
</dbReference>
<dbReference type="InterPro" id="IPR000073">
    <property type="entry name" value="AB_hydrolase_1"/>
</dbReference>
<dbReference type="InterPro" id="IPR029058">
    <property type="entry name" value="AB_hydrolase_fold"/>
</dbReference>
<dbReference type="InterPro" id="IPR022485">
    <property type="entry name" value="SHCHC_synthase_MenH"/>
</dbReference>
<dbReference type="NCBIfam" id="TIGR03695">
    <property type="entry name" value="menH_SHCHC"/>
    <property type="match status" value="1"/>
</dbReference>
<dbReference type="NCBIfam" id="NF008340">
    <property type="entry name" value="PRK11126.1"/>
    <property type="match status" value="1"/>
</dbReference>
<dbReference type="PANTHER" id="PTHR42916">
    <property type="entry name" value="2-SUCCINYL-5-ENOLPYRUVYL-6-HYDROXY-3-CYCLOHEXENE-1-CARBOXYLATE SYNTHASE"/>
    <property type="match status" value="1"/>
</dbReference>
<dbReference type="PANTHER" id="PTHR42916:SF1">
    <property type="entry name" value="PROTEIN PHYLLO, CHLOROPLASTIC"/>
    <property type="match status" value="1"/>
</dbReference>
<dbReference type="Pfam" id="PF12697">
    <property type="entry name" value="Abhydrolase_6"/>
    <property type="match status" value="1"/>
</dbReference>
<dbReference type="SUPFAM" id="SSF53474">
    <property type="entry name" value="alpha/beta-Hydrolases"/>
    <property type="match status" value="1"/>
</dbReference>
<feature type="chain" id="PRO_0000341932" description="2-succinyl-6-hydroxy-2,4-cyclohexadiene-1-carboxylate synthase">
    <location>
        <begin position="1"/>
        <end position="272"/>
    </location>
</feature>
<name>MENH_YERPA</name>
<comment type="function">
    <text evidence="1">Catalyzes a proton abstraction reaction that results in 2,5-elimination of pyruvate from 2-succinyl-5-enolpyruvyl-6-hydroxy-3-cyclohexene-1-carboxylate (SEPHCHC) and the formation of 2-succinyl-6-hydroxy-2,4-cyclohexadiene-1-carboxylate (SHCHC).</text>
</comment>
<comment type="catalytic activity">
    <reaction evidence="1">
        <text>5-enolpyruvoyl-6-hydroxy-2-succinyl-cyclohex-3-ene-1-carboxylate = (1R,6R)-6-hydroxy-2-succinyl-cyclohexa-2,4-diene-1-carboxylate + pyruvate</text>
        <dbReference type="Rhea" id="RHEA:25597"/>
        <dbReference type="ChEBI" id="CHEBI:15361"/>
        <dbReference type="ChEBI" id="CHEBI:58689"/>
        <dbReference type="ChEBI" id="CHEBI:58818"/>
        <dbReference type="EC" id="4.2.99.20"/>
    </reaction>
</comment>
<comment type="pathway">
    <text evidence="1">Quinol/quinone metabolism; 1,4-dihydroxy-2-naphthoate biosynthesis; 1,4-dihydroxy-2-naphthoate from chorismate: step 3/7.</text>
</comment>
<comment type="pathway">
    <text evidence="1">Quinol/quinone metabolism; menaquinone biosynthesis.</text>
</comment>
<comment type="subunit">
    <text evidence="1">Monomer.</text>
</comment>
<comment type="similarity">
    <text evidence="1">Belongs to the AB hydrolase superfamily. MenH family.</text>
</comment>
<gene>
    <name evidence="1" type="primary">menH</name>
    <name type="ordered locus">YPA_2018</name>
</gene>